<accession>Q888V8</accession>
<reference key="1">
    <citation type="journal article" date="2003" name="Proc. Natl. Acad. Sci. U.S.A.">
        <title>The complete genome sequence of the Arabidopsis and tomato pathogen Pseudomonas syringae pv. tomato DC3000.</title>
        <authorList>
            <person name="Buell C.R."/>
            <person name="Joardar V."/>
            <person name="Lindeberg M."/>
            <person name="Selengut J."/>
            <person name="Paulsen I.T."/>
            <person name="Gwinn M.L."/>
            <person name="Dodson R.J."/>
            <person name="DeBoy R.T."/>
            <person name="Durkin A.S."/>
            <person name="Kolonay J.F."/>
            <person name="Madupu R."/>
            <person name="Daugherty S.C."/>
            <person name="Brinkac L.M."/>
            <person name="Beanan M.J."/>
            <person name="Haft D.H."/>
            <person name="Nelson W.C."/>
            <person name="Davidsen T.M."/>
            <person name="Zafar N."/>
            <person name="Zhou L."/>
            <person name="Liu J."/>
            <person name="Yuan Q."/>
            <person name="Khouri H.M."/>
            <person name="Fedorova N.B."/>
            <person name="Tran B."/>
            <person name="Russell D."/>
            <person name="Berry K.J."/>
            <person name="Utterback T.R."/>
            <person name="Van Aken S.E."/>
            <person name="Feldblyum T.V."/>
            <person name="D'Ascenzo M."/>
            <person name="Deng W.-L."/>
            <person name="Ramos A.R."/>
            <person name="Alfano J.R."/>
            <person name="Cartinhour S."/>
            <person name="Chatterjee A.K."/>
            <person name="Delaney T.P."/>
            <person name="Lazarowitz S.G."/>
            <person name="Martin G.B."/>
            <person name="Schneider D.J."/>
            <person name="Tang X."/>
            <person name="Bender C.L."/>
            <person name="White O."/>
            <person name="Fraser C.M."/>
            <person name="Collmer A."/>
        </authorList>
    </citation>
    <scope>NUCLEOTIDE SEQUENCE [LARGE SCALE GENOMIC DNA]</scope>
    <source>
        <strain>ATCC BAA-871 / DC3000</strain>
    </source>
</reference>
<gene>
    <name evidence="1" type="primary">cheB2</name>
    <name type="synonym">cheB1</name>
    <name type="ordered locus">PSPTO_0908</name>
</gene>
<dbReference type="EC" id="3.1.1.61" evidence="1"/>
<dbReference type="EC" id="3.5.1.44" evidence="1"/>
<dbReference type="EMBL" id="AE016853">
    <property type="protein sequence ID" value="AAO54442.1"/>
    <property type="molecule type" value="Genomic_DNA"/>
</dbReference>
<dbReference type="RefSeq" id="NP_790747.1">
    <property type="nucleotide sequence ID" value="NC_004578.1"/>
</dbReference>
<dbReference type="RefSeq" id="WP_005769995.1">
    <property type="nucleotide sequence ID" value="NC_004578.1"/>
</dbReference>
<dbReference type="SMR" id="Q888V8"/>
<dbReference type="STRING" id="223283.PSPTO_0908"/>
<dbReference type="GeneID" id="1182537"/>
<dbReference type="KEGG" id="pst:PSPTO_0908"/>
<dbReference type="PATRIC" id="fig|223283.9.peg.919"/>
<dbReference type="eggNOG" id="COG2201">
    <property type="taxonomic scope" value="Bacteria"/>
</dbReference>
<dbReference type="HOGENOM" id="CLU_000445_51_0_6"/>
<dbReference type="OrthoDB" id="9793421at2"/>
<dbReference type="PhylomeDB" id="Q888V8"/>
<dbReference type="Proteomes" id="UP000002515">
    <property type="component" value="Chromosome"/>
</dbReference>
<dbReference type="GO" id="GO:0005737">
    <property type="term" value="C:cytoplasm"/>
    <property type="evidence" value="ECO:0007669"/>
    <property type="project" value="UniProtKB-SubCell"/>
</dbReference>
<dbReference type="GO" id="GO:0000156">
    <property type="term" value="F:phosphorelay response regulator activity"/>
    <property type="evidence" value="ECO:0007669"/>
    <property type="project" value="InterPro"/>
</dbReference>
<dbReference type="GO" id="GO:0008984">
    <property type="term" value="F:protein-glutamate methylesterase activity"/>
    <property type="evidence" value="ECO:0007669"/>
    <property type="project" value="UniProtKB-UniRule"/>
</dbReference>
<dbReference type="GO" id="GO:0050568">
    <property type="term" value="F:protein-glutamine glutaminase activity"/>
    <property type="evidence" value="ECO:0007669"/>
    <property type="project" value="UniProtKB-UniRule"/>
</dbReference>
<dbReference type="GO" id="GO:0006935">
    <property type="term" value="P:chemotaxis"/>
    <property type="evidence" value="ECO:0007669"/>
    <property type="project" value="UniProtKB-UniRule"/>
</dbReference>
<dbReference type="CDD" id="cd16432">
    <property type="entry name" value="CheB_Rec"/>
    <property type="match status" value="1"/>
</dbReference>
<dbReference type="CDD" id="cd17541">
    <property type="entry name" value="REC_CheB-like"/>
    <property type="match status" value="1"/>
</dbReference>
<dbReference type="Gene3D" id="3.40.50.2300">
    <property type="match status" value="1"/>
</dbReference>
<dbReference type="Gene3D" id="3.40.50.180">
    <property type="entry name" value="Methylesterase CheB, C-terminal domain"/>
    <property type="match status" value="1"/>
</dbReference>
<dbReference type="HAMAP" id="MF_00099">
    <property type="entry name" value="CheB_chemtxs"/>
    <property type="match status" value="1"/>
</dbReference>
<dbReference type="InterPro" id="IPR008248">
    <property type="entry name" value="CheB-like"/>
</dbReference>
<dbReference type="InterPro" id="IPR035909">
    <property type="entry name" value="CheB_C"/>
</dbReference>
<dbReference type="InterPro" id="IPR011006">
    <property type="entry name" value="CheY-like_superfamily"/>
</dbReference>
<dbReference type="InterPro" id="IPR000673">
    <property type="entry name" value="Sig_transdc_resp-reg_Me-estase"/>
</dbReference>
<dbReference type="InterPro" id="IPR001789">
    <property type="entry name" value="Sig_transdc_resp-reg_receiver"/>
</dbReference>
<dbReference type="NCBIfam" id="NF001965">
    <property type="entry name" value="PRK00742.1"/>
    <property type="match status" value="1"/>
</dbReference>
<dbReference type="NCBIfam" id="NF009206">
    <property type="entry name" value="PRK12555.1"/>
    <property type="match status" value="1"/>
</dbReference>
<dbReference type="PANTHER" id="PTHR42872">
    <property type="entry name" value="PROTEIN-GLUTAMATE METHYLESTERASE/PROTEIN-GLUTAMINE GLUTAMINASE"/>
    <property type="match status" value="1"/>
</dbReference>
<dbReference type="PANTHER" id="PTHR42872:SF6">
    <property type="entry name" value="PROTEIN-GLUTAMATE METHYLESTERASE_PROTEIN-GLUTAMINE GLUTAMINASE"/>
    <property type="match status" value="1"/>
</dbReference>
<dbReference type="Pfam" id="PF01339">
    <property type="entry name" value="CheB_methylest"/>
    <property type="match status" value="1"/>
</dbReference>
<dbReference type="Pfam" id="PF00072">
    <property type="entry name" value="Response_reg"/>
    <property type="match status" value="1"/>
</dbReference>
<dbReference type="PIRSF" id="PIRSF000876">
    <property type="entry name" value="RR_chemtxs_CheB"/>
    <property type="match status" value="1"/>
</dbReference>
<dbReference type="SMART" id="SM00448">
    <property type="entry name" value="REC"/>
    <property type="match status" value="1"/>
</dbReference>
<dbReference type="SUPFAM" id="SSF52172">
    <property type="entry name" value="CheY-like"/>
    <property type="match status" value="1"/>
</dbReference>
<dbReference type="SUPFAM" id="SSF52738">
    <property type="entry name" value="Methylesterase CheB, C-terminal domain"/>
    <property type="match status" value="1"/>
</dbReference>
<dbReference type="PROSITE" id="PS50122">
    <property type="entry name" value="CHEB"/>
    <property type="match status" value="1"/>
</dbReference>
<dbReference type="PROSITE" id="PS50110">
    <property type="entry name" value="RESPONSE_REGULATORY"/>
    <property type="match status" value="1"/>
</dbReference>
<organism>
    <name type="scientific">Pseudomonas syringae pv. tomato (strain ATCC BAA-871 / DC3000)</name>
    <dbReference type="NCBI Taxonomy" id="223283"/>
    <lineage>
        <taxon>Bacteria</taxon>
        <taxon>Pseudomonadati</taxon>
        <taxon>Pseudomonadota</taxon>
        <taxon>Gammaproteobacteria</taxon>
        <taxon>Pseudomonadales</taxon>
        <taxon>Pseudomonadaceae</taxon>
        <taxon>Pseudomonas</taxon>
    </lineage>
</organism>
<proteinExistence type="inferred from homology"/>
<protein>
    <recommendedName>
        <fullName evidence="1">Protein-glutamate methylesterase/protein-glutamine glutaminase 2</fullName>
        <ecNumber evidence="1">3.1.1.61</ecNumber>
        <ecNumber evidence="1">3.5.1.44</ecNumber>
    </recommendedName>
</protein>
<evidence type="ECO:0000255" key="1">
    <source>
        <dbReference type="HAMAP-Rule" id="MF_00099"/>
    </source>
</evidence>
<sequence length="358" mass="37994">MPGKKISVLLVDDSAVVRQVLVAILNETPDIHVMAAASDPIFAMGKLAHEWPDVIVLDVEMPRMDGITFLKKIMSERPTPVVICSSLTQKGAETSLQALSAGAVEIITKPTTGLKNFLIESAAELVAAIRAAANSNVKNLGKRTATPVLTPASKLTADAILPAASGHSMAQTTERIVAIGTSTGGTQALEAVLTALPRVCPGIVIVQHMPEKFTASFAERLNGLSQIEVREARNNDRILPGLALIAPGGKHMMVTRSGAYYHVQVIDGPLVNRHRPSVDVLFRSVARFAGKNATGIIMTGMGDDGARGLKEMLDAGSSTVAQDEASCVVFGMPKEAIKLNAAQRIMPLQEIHQAILHR</sequence>
<feature type="chain" id="PRO_0000158015" description="Protein-glutamate methylesterase/protein-glutamine glutaminase 2">
    <location>
        <begin position="1"/>
        <end position="358"/>
    </location>
</feature>
<feature type="domain" description="Response regulatory" evidence="1">
    <location>
        <begin position="7"/>
        <end position="124"/>
    </location>
</feature>
<feature type="domain" description="CheB-type methylesterase" evidence="1">
    <location>
        <begin position="170"/>
        <end position="358"/>
    </location>
</feature>
<feature type="active site" evidence="1">
    <location>
        <position position="182"/>
    </location>
</feature>
<feature type="active site" evidence="1">
    <location>
        <position position="208"/>
    </location>
</feature>
<feature type="active site" evidence="1">
    <location>
        <position position="304"/>
    </location>
</feature>
<feature type="modified residue" description="4-aspartylphosphate" evidence="1">
    <location>
        <position position="58"/>
    </location>
</feature>
<comment type="function">
    <text evidence="1">Involved in chemotaxis. Part of a chemotaxis signal transduction system that modulates chemotaxis in response to various stimuli. Catalyzes the demethylation of specific methylglutamate residues introduced into the chemoreceptors (methyl-accepting chemotaxis proteins or MCP) by CheR. Also mediates the irreversible deamidation of specific glutamine residues to glutamic acid.</text>
</comment>
<comment type="catalytic activity">
    <reaction evidence="1">
        <text>[protein]-L-glutamate 5-O-methyl ester + H2O = L-glutamyl-[protein] + methanol + H(+)</text>
        <dbReference type="Rhea" id="RHEA:23236"/>
        <dbReference type="Rhea" id="RHEA-COMP:10208"/>
        <dbReference type="Rhea" id="RHEA-COMP:10311"/>
        <dbReference type="ChEBI" id="CHEBI:15377"/>
        <dbReference type="ChEBI" id="CHEBI:15378"/>
        <dbReference type="ChEBI" id="CHEBI:17790"/>
        <dbReference type="ChEBI" id="CHEBI:29973"/>
        <dbReference type="ChEBI" id="CHEBI:82795"/>
        <dbReference type="EC" id="3.1.1.61"/>
    </reaction>
</comment>
<comment type="catalytic activity">
    <reaction evidence="1">
        <text>L-glutaminyl-[protein] + H2O = L-glutamyl-[protein] + NH4(+)</text>
        <dbReference type="Rhea" id="RHEA:16441"/>
        <dbReference type="Rhea" id="RHEA-COMP:10207"/>
        <dbReference type="Rhea" id="RHEA-COMP:10208"/>
        <dbReference type="ChEBI" id="CHEBI:15377"/>
        <dbReference type="ChEBI" id="CHEBI:28938"/>
        <dbReference type="ChEBI" id="CHEBI:29973"/>
        <dbReference type="ChEBI" id="CHEBI:30011"/>
        <dbReference type="EC" id="3.5.1.44"/>
    </reaction>
</comment>
<comment type="subcellular location">
    <subcellularLocation>
        <location evidence="1">Cytoplasm</location>
    </subcellularLocation>
</comment>
<comment type="domain">
    <text evidence="1">Contains a C-terminal catalytic domain, and an N-terminal region which modulates catalytic activity.</text>
</comment>
<comment type="PTM">
    <text evidence="1">Phosphorylated by CheA. Phosphorylation of the N-terminal regulatory domain activates the methylesterase activity.</text>
</comment>
<comment type="similarity">
    <text evidence="1">Belongs to the CheB family.</text>
</comment>
<name>CHEB2_PSESM</name>
<keyword id="KW-0145">Chemotaxis</keyword>
<keyword id="KW-0963">Cytoplasm</keyword>
<keyword id="KW-0378">Hydrolase</keyword>
<keyword id="KW-0597">Phosphoprotein</keyword>
<keyword id="KW-1185">Reference proteome</keyword>